<accession>Q9USQ7</accession>
<name>DPH6_SCHPO</name>
<reference key="1">
    <citation type="journal article" date="2002" name="Nature">
        <title>The genome sequence of Schizosaccharomyces pombe.</title>
        <authorList>
            <person name="Wood V."/>
            <person name="Gwilliam R."/>
            <person name="Rajandream M.A."/>
            <person name="Lyne M.H."/>
            <person name="Lyne R."/>
            <person name="Stewart A."/>
            <person name="Sgouros J.G."/>
            <person name="Peat N."/>
            <person name="Hayles J."/>
            <person name="Baker S.G."/>
            <person name="Basham D."/>
            <person name="Bowman S."/>
            <person name="Brooks K."/>
            <person name="Brown D."/>
            <person name="Brown S."/>
            <person name="Chillingworth T."/>
            <person name="Churcher C.M."/>
            <person name="Collins M."/>
            <person name="Connor R."/>
            <person name="Cronin A."/>
            <person name="Davis P."/>
            <person name="Feltwell T."/>
            <person name="Fraser A."/>
            <person name="Gentles S."/>
            <person name="Goble A."/>
            <person name="Hamlin N."/>
            <person name="Harris D.E."/>
            <person name="Hidalgo J."/>
            <person name="Hodgson G."/>
            <person name="Holroyd S."/>
            <person name="Hornsby T."/>
            <person name="Howarth S."/>
            <person name="Huckle E.J."/>
            <person name="Hunt S."/>
            <person name="Jagels K."/>
            <person name="James K.D."/>
            <person name="Jones L."/>
            <person name="Jones M."/>
            <person name="Leather S."/>
            <person name="McDonald S."/>
            <person name="McLean J."/>
            <person name="Mooney P."/>
            <person name="Moule S."/>
            <person name="Mungall K.L."/>
            <person name="Murphy L.D."/>
            <person name="Niblett D."/>
            <person name="Odell C."/>
            <person name="Oliver K."/>
            <person name="O'Neil S."/>
            <person name="Pearson D."/>
            <person name="Quail M.A."/>
            <person name="Rabbinowitsch E."/>
            <person name="Rutherford K.M."/>
            <person name="Rutter S."/>
            <person name="Saunders D."/>
            <person name="Seeger K."/>
            <person name="Sharp S."/>
            <person name="Skelton J."/>
            <person name="Simmonds M.N."/>
            <person name="Squares R."/>
            <person name="Squares S."/>
            <person name="Stevens K."/>
            <person name="Taylor K."/>
            <person name="Taylor R.G."/>
            <person name="Tivey A."/>
            <person name="Walsh S.V."/>
            <person name="Warren T."/>
            <person name="Whitehead S."/>
            <person name="Woodward J.R."/>
            <person name="Volckaert G."/>
            <person name="Aert R."/>
            <person name="Robben J."/>
            <person name="Grymonprez B."/>
            <person name="Weltjens I."/>
            <person name="Vanstreels E."/>
            <person name="Rieger M."/>
            <person name="Schaefer M."/>
            <person name="Mueller-Auer S."/>
            <person name="Gabel C."/>
            <person name="Fuchs M."/>
            <person name="Duesterhoeft A."/>
            <person name="Fritzc C."/>
            <person name="Holzer E."/>
            <person name="Moestl D."/>
            <person name="Hilbert H."/>
            <person name="Borzym K."/>
            <person name="Langer I."/>
            <person name="Beck A."/>
            <person name="Lehrach H."/>
            <person name="Reinhardt R."/>
            <person name="Pohl T.M."/>
            <person name="Eger P."/>
            <person name="Zimmermann W."/>
            <person name="Wedler H."/>
            <person name="Wambutt R."/>
            <person name="Purnelle B."/>
            <person name="Goffeau A."/>
            <person name="Cadieu E."/>
            <person name="Dreano S."/>
            <person name="Gloux S."/>
            <person name="Lelaure V."/>
            <person name="Mottier S."/>
            <person name="Galibert F."/>
            <person name="Aves S.J."/>
            <person name="Xiang Z."/>
            <person name="Hunt C."/>
            <person name="Moore K."/>
            <person name="Hurst S.M."/>
            <person name="Lucas M."/>
            <person name="Rochet M."/>
            <person name="Gaillardin C."/>
            <person name="Tallada V.A."/>
            <person name="Garzon A."/>
            <person name="Thode G."/>
            <person name="Daga R.R."/>
            <person name="Cruzado L."/>
            <person name="Jimenez J."/>
            <person name="Sanchez M."/>
            <person name="del Rey F."/>
            <person name="Benito J."/>
            <person name="Dominguez A."/>
            <person name="Revuelta J.L."/>
            <person name="Moreno S."/>
            <person name="Armstrong J."/>
            <person name="Forsburg S.L."/>
            <person name="Cerutti L."/>
            <person name="Lowe T."/>
            <person name="McCombie W.R."/>
            <person name="Paulsen I."/>
            <person name="Potashkin J."/>
            <person name="Shpakovski G.V."/>
            <person name="Ussery D."/>
            <person name="Barrell B.G."/>
            <person name="Nurse P."/>
        </authorList>
    </citation>
    <scope>NUCLEOTIDE SEQUENCE [LARGE SCALE GENOMIC DNA]</scope>
    <source>
        <strain>972 / ATCC 24843</strain>
    </source>
</reference>
<reference key="2">
    <citation type="journal article" date="2005" name="Curr. Biol.">
        <title>A large-scale screen in S. pombe identifies seven novel genes required for critical meiotic events.</title>
        <authorList>
            <person name="Martin-Castellanos C."/>
            <person name="Blanco M."/>
            <person name="Rozalen A.E."/>
            <person name="Perez-Hidalgo L."/>
            <person name="Garcia A.I."/>
            <person name="Conde F."/>
            <person name="Mata J."/>
            <person name="Ellermeier C."/>
            <person name="Davis L."/>
            <person name="San-Segundo P."/>
            <person name="Smith G.R."/>
            <person name="Moreno S."/>
        </authorList>
    </citation>
    <scope>FUNCTION IN MEIOSIS</scope>
</reference>
<reference key="3">
    <citation type="journal article" date="2006" name="Nat. Biotechnol.">
        <title>ORFeome cloning and global analysis of protein localization in the fission yeast Schizosaccharomyces pombe.</title>
        <authorList>
            <person name="Matsuyama A."/>
            <person name="Arai R."/>
            <person name="Yashiroda Y."/>
            <person name="Shirai A."/>
            <person name="Kamata A."/>
            <person name="Sekido S."/>
            <person name="Kobayashi Y."/>
            <person name="Hashimoto A."/>
            <person name="Hamamoto M."/>
            <person name="Hiraoka Y."/>
            <person name="Horinouchi S."/>
            <person name="Yoshida M."/>
        </authorList>
    </citation>
    <scope>SUBCELLULAR LOCATION [LARGE SCALE ANALYSIS]</scope>
</reference>
<feature type="chain" id="PRO_0000278564" description="Diphthine--ammonia ligase">
    <location>
        <begin position="1"/>
        <end position="606"/>
    </location>
</feature>
<sequence>MKVLGLISGGKDSCFNLMHCVSLGHEVVALANLHPEDGKDEIDSFMYQSVGHDVIPLYAECFDLPLYREKIGGQSINQNLDYQFTEKDETEDLYRLIKRVLTNHPDLEAVSTGAILSTYQRTRVENVCKRLGLKSLSFLWQKDQEKLLNDMVVSGLNAILIKVAAIGLTRKDLGKSLAEMQDKLLTLNKKFELHPCGEGGEYETLVLDCPLFKKRIVLTDKEVVEHSSGEVCYLKVKACVKDKPEWQPISLKSELVPNEELLGEEYSHIYHTISKKYELIDDQEETPTSLIPIPLRESAFQQKKGSFLVLGNVVATKGSYNTFQGEAESAINNLNELLGTYGYSNKNVYFVTVILSSMSKFAEFNSVYNKYFDFTNPPSRSCVAAPLASEYRIVMSCIVGDVTEKRALHVQGQSYWAPANIGPYSQSICANGVVFISGQIGLIPSVMELKLHDKIFEMVLALQHANRVAKAMRVGSLIACLAYVCDSRDADCVVKIWSEYTKNTGESSPVLVALVDALPRNASVEWQLLYNDSSCDVPLLSSLVTNQTLFGSDTAWDVALLNQNGLRMESSFIHHEHPSAYAIVLNNAFPNSQLLHVRYTARDQNV</sequence>
<keyword id="KW-0067">ATP-binding</keyword>
<keyword id="KW-0963">Cytoplasm</keyword>
<keyword id="KW-0436">Ligase</keyword>
<keyword id="KW-0469">Meiosis</keyword>
<keyword id="KW-0547">Nucleotide-binding</keyword>
<keyword id="KW-0539">Nucleus</keyword>
<keyword id="KW-1185">Reference proteome</keyword>
<organism>
    <name type="scientific">Schizosaccharomyces pombe (strain 972 / ATCC 24843)</name>
    <name type="common">Fission yeast</name>
    <dbReference type="NCBI Taxonomy" id="284812"/>
    <lineage>
        <taxon>Eukaryota</taxon>
        <taxon>Fungi</taxon>
        <taxon>Dikarya</taxon>
        <taxon>Ascomycota</taxon>
        <taxon>Taphrinomycotina</taxon>
        <taxon>Schizosaccharomycetes</taxon>
        <taxon>Schizosaccharomycetales</taxon>
        <taxon>Schizosaccharomycetaceae</taxon>
        <taxon>Schizosaccharomyces</taxon>
    </lineage>
</organism>
<proteinExistence type="evidence at protein level"/>
<comment type="function">
    <text evidence="1 2">Amidase that catalyzes the last step of diphthamide biosynthesis using ammonium and ATP. Diphthamide biosynthesis consists in the conversion of an L-histidine residue in the translation elongation factor eEF-2 (eft201 or eft202) to diphthamide (By similarity). Has a role in meiosis.</text>
</comment>
<comment type="catalytic activity">
    <reaction>
        <text>diphthine-[translation elongation factor 2] + NH4(+) + ATP = diphthamide-[translation elongation factor 2] + AMP + diphosphate + H(+)</text>
        <dbReference type="Rhea" id="RHEA:19753"/>
        <dbReference type="Rhea" id="RHEA-COMP:10172"/>
        <dbReference type="Rhea" id="RHEA-COMP:10174"/>
        <dbReference type="ChEBI" id="CHEBI:15378"/>
        <dbReference type="ChEBI" id="CHEBI:16692"/>
        <dbReference type="ChEBI" id="CHEBI:28938"/>
        <dbReference type="ChEBI" id="CHEBI:30616"/>
        <dbReference type="ChEBI" id="CHEBI:33019"/>
        <dbReference type="ChEBI" id="CHEBI:82696"/>
        <dbReference type="ChEBI" id="CHEBI:456215"/>
        <dbReference type="EC" id="6.3.1.14"/>
    </reaction>
</comment>
<comment type="pathway">
    <text>Protein modification; peptidyl-diphthamide biosynthesis.</text>
</comment>
<comment type="subcellular location">
    <subcellularLocation>
        <location evidence="3">Cytoplasm</location>
    </subcellularLocation>
    <subcellularLocation>
        <location evidence="3">Nucleus</location>
    </subcellularLocation>
</comment>
<comment type="similarity">
    <text evidence="4">In the N-terminal section; belongs to the Diphthine--ammonia ligase family.</text>
</comment>
<comment type="similarity">
    <text evidence="4">In the C-terminal section; belongs to the RutC family.</text>
</comment>
<dbReference type="EC" id="6.3.1.14"/>
<dbReference type="EMBL" id="CU329671">
    <property type="protein sequence ID" value="CAB54820.1"/>
    <property type="molecule type" value="Genomic_DNA"/>
</dbReference>
<dbReference type="PIR" id="T40556">
    <property type="entry name" value="T40556"/>
</dbReference>
<dbReference type="RefSeq" id="NP_595310.1">
    <property type="nucleotide sequence ID" value="NM_001021217.2"/>
</dbReference>
<dbReference type="SMR" id="Q9USQ7"/>
<dbReference type="BioGRID" id="277240">
    <property type="interactions" value="14"/>
</dbReference>
<dbReference type="FunCoup" id="Q9USQ7">
    <property type="interactions" value="29"/>
</dbReference>
<dbReference type="STRING" id="284812.Q9USQ7"/>
<dbReference type="iPTMnet" id="Q9USQ7"/>
<dbReference type="PaxDb" id="4896-SPBC577.12.1"/>
<dbReference type="EnsemblFungi" id="SPBC577.12.1">
    <property type="protein sequence ID" value="SPBC577.12.1:pep"/>
    <property type="gene ID" value="SPBC577.12"/>
</dbReference>
<dbReference type="GeneID" id="2540717"/>
<dbReference type="KEGG" id="spo:2540717"/>
<dbReference type="PomBase" id="SPBC577.12"/>
<dbReference type="VEuPathDB" id="FungiDB:SPBC577.12"/>
<dbReference type="eggNOG" id="KOG2316">
    <property type="taxonomic scope" value="Eukaryota"/>
</dbReference>
<dbReference type="eggNOG" id="KOG2317">
    <property type="taxonomic scope" value="Eukaryota"/>
</dbReference>
<dbReference type="HOGENOM" id="CLU_010289_2_1_1"/>
<dbReference type="InParanoid" id="Q9USQ7"/>
<dbReference type="OMA" id="HCRLAQS"/>
<dbReference type="PhylomeDB" id="Q9USQ7"/>
<dbReference type="Reactome" id="R-SPO-5358493">
    <property type="pathway name" value="Synthesis of diphthamide-EEF2"/>
</dbReference>
<dbReference type="UniPathway" id="UPA00559"/>
<dbReference type="PRO" id="PR:Q9USQ7"/>
<dbReference type="Proteomes" id="UP000002485">
    <property type="component" value="Chromosome II"/>
</dbReference>
<dbReference type="GO" id="GO:0005829">
    <property type="term" value="C:cytosol"/>
    <property type="evidence" value="ECO:0007005"/>
    <property type="project" value="PomBase"/>
</dbReference>
<dbReference type="GO" id="GO:0005634">
    <property type="term" value="C:nucleus"/>
    <property type="evidence" value="ECO:0007005"/>
    <property type="project" value="PomBase"/>
</dbReference>
<dbReference type="GO" id="GO:0005524">
    <property type="term" value="F:ATP binding"/>
    <property type="evidence" value="ECO:0007669"/>
    <property type="project" value="UniProtKB-KW"/>
</dbReference>
<dbReference type="GO" id="GO:0017178">
    <property type="term" value="F:diphthine-ammonia ligase activity"/>
    <property type="evidence" value="ECO:0000318"/>
    <property type="project" value="GO_Central"/>
</dbReference>
<dbReference type="GO" id="GO:0051321">
    <property type="term" value="P:meiotic cell cycle"/>
    <property type="evidence" value="ECO:0007669"/>
    <property type="project" value="UniProtKB-KW"/>
</dbReference>
<dbReference type="GO" id="GO:0017183">
    <property type="term" value="P:protein histidyl modification to diphthamide"/>
    <property type="evidence" value="ECO:0000318"/>
    <property type="project" value="GO_Central"/>
</dbReference>
<dbReference type="GO" id="GO:2000765">
    <property type="term" value="P:regulation of cytoplasmic translation"/>
    <property type="evidence" value="ECO:0000305"/>
    <property type="project" value="PomBase"/>
</dbReference>
<dbReference type="CDD" id="cd01994">
    <property type="entry name" value="AANH_PF0828-like"/>
    <property type="match status" value="1"/>
</dbReference>
<dbReference type="CDD" id="cd06155">
    <property type="entry name" value="eu_AANH_C_1"/>
    <property type="match status" value="1"/>
</dbReference>
<dbReference type="CDD" id="cd06156">
    <property type="entry name" value="eu_AANH_C_2"/>
    <property type="match status" value="1"/>
</dbReference>
<dbReference type="FunFam" id="3.40.50.620:FF:000145">
    <property type="entry name" value="ATP-binding domain containing protein"/>
    <property type="match status" value="1"/>
</dbReference>
<dbReference type="FunFam" id="3.30.1330.40:FF:000010">
    <property type="entry name" value="Diphthine--ammonia ligase"/>
    <property type="match status" value="1"/>
</dbReference>
<dbReference type="FunFam" id="3.90.1490.10:FF:000001">
    <property type="entry name" value="Diphthine--ammonia ligase"/>
    <property type="match status" value="1"/>
</dbReference>
<dbReference type="FunFam" id="3.30.1330.40:FF:000012">
    <property type="entry name" value="diphthine--ammonia ligase isoform X1"/>
    <property type="match status" value="1"/>
</dbReference>
<dbReference type="Gene3D" id="3.40.50.620">
    <property type="entry name" value="HUPs"/>
    <property type="match status" value="1"/>
</dbReference>
<dbReference type="Gene3D" id="3.90.1490.10">
    <property type="entry name" value="putative n-type atp pyrophosphatase, domain 2"/>
    <property type="match status" value="1"/>
</dbReference>
<dbReference type="Gene3D" id="3.30.1330.40">
    <property type="entry name" value="RutC-like"/>
    <property type="match status" value="2"/>
</dbReference>
<dbReference type="InterPro" id="IPR002761">
    <property type="entry name" value="Diphthami_syn_dom"/>
</dbReference>
<dbReference type="InterPro" id="IPR030662">
    <property type="entry name" value="DPH6/MJ0570"/>
</dbReference>
<dbReference type="InterPro" id="IPR014729">
    <property type="entry name" value="Rossmann-like_a/b/a_fold"/>
</dbReference>
<dbReference type="InterPro" id="IPR035959">
    <property type="entry name" value="RutC-like_sf"/>
</dbReference>
<dbReference type="InterPro" id="IPR006175">
    <property type="entry name" value="YjgF/YER057c/UK114"/>
</dbReference>
<dbReference type="NCBIfam" id="TIGR00290">
    <property type="entry name" value="MJ0570_dom"/>
    <property type="match status" value="1"/>
</dbReference>
<dbReference type="PANTHER" id="PTHR12196:SF2">
    <property type="entry name" value="DIPHTHINE--AMMONIA LIGASE"/>
    <property type="match status" value="1"/>
</dbReference>
<dbReference type="PANTHER" id="PTHR12196">
    <property type="entry name" value="DOMAIN OF UNKNOWN FUNCTION 71 DUF71 -CONTAINING PROTEIN"/>
    <property type="match status" value="1"/>
</dbReference>
<dbReference type="Pfam" id="PF01902">
    <property type="entry name" value="Diphthami_syn_2"/>
    <property type="match status" value="1"/>
</dbReference>
<dbReference type="Pfam" id="PF01042">
    <property type="entry name" value="Ribonuc_L-PSP"/>
    <property type="match status" value="2"/>
</dbReference>
<dbReference type="SUPFAM" id="SSF52402">
    <property type="entry name" value="Adenine nucleotide alpha hydrolases-like"/>
    <property type="match status" value="1"/>
</dbReference>
<dbReference type="SUPFAM" id="SSF55298">
    <property type="entry name" value="YjgF-like"/>
    <property type="match status" value="2"/>
</dbReference>
<evidence type="ECO:0000250" key="1"/>
<evidence type="ECO:0000269" key="2">
    <source>
    </source>
</evidence>
<evidence type="ECO:0000269" key="3">
    <source>
    </source>
</evidence>
<evidence type="ECO:0000305" key="4"/>
<gene>
    <name type="primary">mug71</name>
    <name type="ORF">SPBC577.12</name>
</gene>
<protein>
    <recommendedName>
        <fullName>Diphthine--ammonia ligase</fullName>
        <ecNumber>6.3.1.14</ecNumber>
    </recommendedName>
    <alternativeName>
        <fullName>Diphthamide synthase</fullName>
    </alternativeName>
    <alternativeName>
        <fullName>Diphthamide synthetase</fullName>
    </alternativeName>
</protein>